<proteinExistence type="inferred from homology"/>
<feature type="chain" id="PRO_0000300606" description="UPF0354 protein BALH_4267">
    <location>
        <begin position="1"/>
        <end position="270"/>
    </location>
</feature>
<protein>
    <recommendedName>
        <fullName evidence="1">UPF0354 protein BALH_4267</fullName>
    </recommendedName>
</protein>
<evidence type="ECO:0000255" key="1">
    <source>
        <dbReference type="HAMAP-Rule" id="MF_01548"/>
    </source>
</evidence>
<sequence length="270" mass="31032">MKMTSKKMKDELMKKLSRPEWDFQYDSEKEVLRIEQKDSKKGINVSLPGVVAKWEVNKEKAIEEVAYYVQEALIAMHKEENSTAKILPVIRSTSFPKQAEEGNPFIMTDHTAETRIYYALDSNKTYRLIDERLLQKLGLTEQQVREMALFNARSLGYEFKQDTVAGNTFYFLNTNDGYDATRILNESLLQSMREKISGDMVVAVPHQDVLIIADIVNEIGYDIIAQMTMKFFAEGHVPITSLSFVYEDGDFEPIFILAKNRKKTDGKEKG</sequence>
<reference key="1">
    <citation type="journal article" date="2007" name="J. Bacteriol.">
        <title>The complete genome sequence of Bacillus thuringiensis Al Hakam.</title>
        <authorList>
            <person name="Challacombe J.F."/>
            <person name="Altherr M.R."/>
            <person name="Xie G."/>
            <person name="Bhotika S.S."/>
            <person name="Brown N."/>
            <person name="Bruce D."/>
            <person name="Campbell C.S."/>
            <person name="Campbell M.L."/>
            <person name="Chen J."/>
            <person name="Chertkov O."/>
            <person name="Cleland C."/>
            <person name="Dimitrijevic M."/>
            <person name="Doggett N.A."/>
            <person name="Fawcett J.J."/>
            <person name="Glavina T."/>
            <person name="Goodwin L.A."/>
            <person name="Green L.D."/>
            <person name="Han C.S."/>
            <person name="Hill K.K."/>
            <person name="Hitchcock P."/>
            <person name="Jackson P.J."/>
            <person name="Keim P."/>
            <person name="Kewalramani A.R."/>
            <person name="Longmire J."/>
            <person name="Lucas S."/>
            <person name="Malfatti S."/>
            <person name="Martinez D."/>
            <person name="McMurry K."/>
            <person name="Meincke L.J."/>
            <person name="Misra M."/>
            <person name="Moseman B.L."/>
            <person name="Mundt M."/>
            <person name="Munk A.C."/>
            <person name="Okinaka R.T."/>
            <person name="Parson-Quintana B."/>
            <person name="Reilly L.P."/>
            <person name="Richardson P."/>
            <person name="Robinson D.L."/>
            <person name="Saunders E."/>
            <person name="Tapia R."/>
            <person name="Tesmer J.G."/>
            <person name="Thayer N."/>
            <person name="Thompson L.S."/>
            <person name="Tice H."/>
            <person name="Ticknor L.O."/>
            <person name="Wills P.L."/>
            <person name="Gilna P."/>
            <person name="Brettin T.S."/>
        </authorList>
    </citation>
    <scope>NUCLEOTIDE SEQUENCE [LARGE SCALE GENOMIC DNA]</scope>
    <source>
        <strain>Al Hakam</strain>
    </source>
</reference>
<name>Y4267_BACAH</name>
<gene>
    <name type="ordered locus">BALH_4267</name>
</gene>
<comment type="similarity">
    <text evidence="1">Belongs to the UPF0354 family.</text>
</comment>
<dbReference type="EMBL" id="CP000485">
    <property type="protein sequence ID" value="ABK87474.1"/>
    <property type="molecule type" value="Genomic_DNA"/>
</dbReference>
<dbReference type="RefSeq" id="WP_000784608.1">
    <property type="nucleotide sequence ID" value="NC_008600.1"/>
</dbReference>
<dbReference type="KEGG" id="btl:BALH_4267"/>
<dbReference type="HOGENOM" id="CLU_085634_0_0_9"/>
<dbReference type="HAMAP" id="MF_01548">
    <property type="entry name" value="UPF0354"/>
    <property type="match status" value="1"/>
</dbReference>
<dbReference type="InterPro" id="IPR010838">
    <property type="entry name" value="DUF1444"/>
</dbReference>
<dbReference type="NCBIfam" id="NF010189">
    <property type="entry name" value="PRK13668.1"/>
    <property type="match status" value="1"/>
</dbReference>
<dbReference type="Pfam" id="PF07285">
    <property type="entry name" value="DUF1444"/>
    <property type="match status" value="1"/>
</dbReference>
<dbReference type="PIRSF" id="PIRSF012562">
    <property type="entry name" value="UCP012562"/>
    <property type="match status" value="1"/>
</dbReference>
<organism>
    <name type="scientific">Bacillus thuringiensis (strain Al Hakam)</name>
    <dbReference type="NCBI Taxonomy" id="412694"/>
    <lineage>
        <taxon>Bacteria</taxon>
        <taxon>Bacillati</taxon>
        <taxon>Bacillota</taxon>
        <taxon>Bacilli</taxon>
        <taxon>Bacillales</taxon>
        <taxon>Bacillaceae</taxon>
        <taxon>Bacillus</taxon>
        <taxon>Bacillus cereus group</taxon>
    </lineage>
</organism>
<accession>A0RJT1</accession>